<keyword id="KW-0027">Amidation</keyword>
<keyword id="KW-0903">Direct protein sequencing</keyword>
<keyword id="KW-1015">Disulfide bond</keyword>
<keyword id="KW-0372">Hormone</keyword>
<keyword id="KW-0964">Secreted</keyword>
<sequence>CSGLSTCALMKLSQDLHRFNSYPRTNVGAGTP</sequence>
<evidence type="ECO:0000250" key="1">
    <source>
        <dbReference type="UniProtKB" id="P01258"/>
    </source>
</evidence>
<evidence type="ECO:0000269" key="2">
    <source>
    </source>
</evidence>
<evidence type="ECO:0000303" key="3">
    <source>
    </source>
</evidence>
<evidence type="ECO:0000305" key="4"/>
<dbReference type="SMR" id="P0C234"/>
<dbReference type="GO" id="GO:0005576">
    <property type="term" value="C:extracellular region"/>
    <property type="evidence" value="ECO:0007669"/>
    <property type="project" value="UniProtKB-SubCell"/>
</dbReference>
<dbReference type="GO" id="GO:0005179">
    <property type="term" value="F:hormone activity"/>
    <property type="evidence" value="ECO:0007669"/>
    <property type="project" value="UniProtKB-KW"/>
</dbReference>
<dbReference type="InterPro" id="IPR021118">
    <property type="entry name" value="Calcitonin"/>
</dbReference>
<dbReference type="InterPro" id="IPR001693">
    <property type="entry name" value="Calcitonin_peptide-like"/>
</dbReference>
<dbReference type="PRINTS" id="PR00270">
    <property type="entry name" value="CALCITONINA"/>
</dbReference>
<dbReference type="SMART" id="SM00113">
    <property type="entry name" value="CALCITONIN"/>
    <property type="match status" value="1"/>
</dbReference>
<comment type="function">
    <text evidence="2">Causes a rapid but short-lived drop in the level of calcium and phosphate in blood by promoting the incorporation of those ions in the bones.</text>
</comment>
<comment type="subcellular location">
    <subcellularLocation>
        <location>Secreted</location>
    </subcellularLocation>
</comment>
<comment type="similarity">
    <text evidence="4">Belongs to the calcitonin family.</text>
</comment>
<accession>P0C234</accession>
<proteinExistence type="evidence at protein level"/>
<reference key="1">
    <citation type="journal article" date="1997" name="Gen. Comp. Endocrinol.">
        <title>Primary structure and bioactivity of bullfrog calcitonin.</title>
        <authorList>
            <person name="Yoshida A."/>
            <person name="Kaiya H."/>
            <person name="Takei Y."/>
            <person name="Watanabe T.X."/>
            <person name="Nakajima K."/>
            <person name="Suzuki N."/>
            <person name="Sasayama Y."/>
        </authorList>
    </citation>
    <scope>PROTEIN SEQUENCE</scope>
    <scope>AMIDATION AT PRO-32</scope>
    <scope>FUNCTION</scope>
</reference>
<organism>
    <name type="scientific">Aquarana catesbeiana</name>
    <name type="common">American bullfrog</name>
    <name type="synonym">Rana catesbeiana</name>
    <dbReference type="NCBI Taxonomy" id="8400"/>
    <lineage>
        <taxon>Eukaryota</taxon>
        <taxon>Metazoa</taxon>
        <taxon>Chordata</taxon>
        <taxon>Craniata</taxon>
        <taxon>Vertebrata</taxon>
        <taxon>Euteleostomi</taxon>
        <taxon>Amphibia</taxon>
        <taxon>Batrachia</taxon>
        <taxon>Anura</taxon>
        <taxon>Neobatrachia</taxon>
        <taxon>Ranoidea</taxon>
        <taxon>Ranidae</taxon>
        <taxon>Aquarana</taxon>
    </lineage>
</organism>
<protein>
    <recommendedName>
        <fullName evidence="3">Calcitonin</fullName>
    </recommendedName>
</protein>
<name>CALC_AQUCT</name>
<feature type="chain" id="PRO_0000260292" description="Calcitonin">
    <location>
        <begin position="1"/>
        <end position="32"/>
    </location>
</feature>
<feature type="modified residue" description="Proline amide" evidence="2">
    <location>
        <position position="32"/>
    </location>
</feature>
<feature type="disulfide bond" evidence="1">
    <location>
        <begin position="1"/>
        <end position="7"/>
    </location>
</feature>